<accession>B9KZX6</accession>
<proteinExistence type="inferred from homology"/>
<comment type="function">
    <text evidence="1">One of two assembly initiator proteins, it binds directly to the 5'-end of the 23S rRNA, where it nucleates assembly of the 50S subunit.</text>
</comment>
<comment type="function">
    <text evidence="1">One of the proteins that surrounds the polypeptide exit tunnel on the outside of the subunit.</text>
</comment>
<comment type="subunit">
    <text evidence="1">Part of the 50S ribosomal subunit.</text>
</comment>
<comment type="similarity">
    <text evidence="1">Belongs to the universal ribosomal protein uL24 family.</text>
</comment>
<dbReference type="EMBL" id="CP001275">
    <property type="protein sequence ID" value="ACM05882.1"/>
    <property type="molecule type" value="Genomic_DNA"/>
</dbReference>
<dbReference type="RefSeq" id="WP_015921937.1">
    <property type="nucleotide sequence ID" value="NC_011959.1"/>
</dbReference>
<dbReference type="SMR" id="B9KZX6"/>
<dbReference type="STRING" id="309801.trd_0973"/>
<dbReference type="KEGG" id="tro:trd_0973"/>
<dbReference type="eggNOG" id="COG0198">
    <property type="taxonomic scope" value="Bacteria"/>
</dbReference>
<dbReference type="HOGENOM" id="CLU_093315_2_0_0"/>
<dbReference type="OrthoDB" id="9807419at2"/>
<dbReference type="Proteomes" id="UP000000447">
    <property type="component" value="Chromosome"/>
</dbReference>
<dbReference type="GO" id="GO:1990904">
    <property type="term" value="C:ribonucleoprotein complex"/>
    <property type="evidence" value="ECO:0007669"/>
    <property type="project" value="UniProtKB-KW"/>
</dbReference>
<dbReference type="GO" id="GO:0005840">
    <property type="term" value="C:ribosome"/>
    <property type="evidence" value="ECO:0007669"/>
    <property type="project" value="UniProtKB-KW"/>
</dbReference>
<dbReference type="GO" id="GO:0019843">
    <property type="term" value="F:rRNA binding"/>
    <property type="evidence" value="ECO:0007669"/>
    <property type="project" value="UniProtKB-UniRule"/>
</dbReference>
<dbReference type="GO" id="GO:0003735">
    <property type="term" value="F:structural constituent of ribosome"/>
    <property type="evidence" value="ECO:0007669"/>
    <property type="project" value="InterPro"/>
</dbReference>
<dbReference type="GO" id="GO:0006412">
    <property type="term" value="P:translation"/>
    <property type="evidence" value="ECO:0007669"/>
    <property type="project" value="UniProtKB-UniRule"/>
</dbReference>
<dbReference type="CDD" id="cd06089">
    <property type="entry name" value="KOW_RPL26"/>
    <property type="match status" value="1"/>
</dbReference>
<dbReference type="FunFam" id="2.30.30.30:FF:000004">
    <property type="entry name" value="50S ribosomal protein L24"/>
    <property type="match status" value="1"/>
</dbReference>
<dbReference type="Gene3D" id="2.30.30.30">
    <property type="match status" value="1"/>
</dbReference>
<dbReference type="HAMAP" id="MF_01326_B">
    <property type="entry name" value="Ribosomal_uL24_B"/>
    <property type="match status" value="1"/>
</dbReference>
<dbReference type="InterPro" id="IPR005824">
    <property type="entry name" value="KOW"/>
</dbReference>
<dbReference type="InterPro" id="IPR014722">
    <property type="entry name" value="Rib_uL2_dom2"/>
</dbReference>
<dbReference type="InterPro" id="IPR003256">
    <property type="entry name" value="Ribosomal_uL24"/>
</dbReference>
<dbReference type="InterPro" id="IPR005825">
    <property type="entry name" value="Ribosomal_uL24_CS"/>
</dbReference>
<dbReference type="InterPro" id="IPR041988">
    <property type="entry name" value="Ribosomal_uL24_KOW"/>
</dbReference>
<dbReference type="InterPro" id="IPR008991">
    <property type="entry name" value="Translation_prot_SH3-like_sf"/>
</dbReference>
<dbReference type="NCBIfam" id="TIGR01079">
    <property type="entry name" value="rplX_bact"/>
    <property type="match status" value="1"/>
</dbReference>
<dbReference type="PANTHER" id="PTHR12903">
    <property type="entry name" value="MITOCHONDRIAL RIBOSOMAL PROTEIN L24"/>
    <property type="match status" value="1"/>
</dbReference>
<dbReference type="Pfam" id="PF00467">
    <property type="entry name" value="KOW"/>
    <property type="match status" value="1"/>
</dbReference>
<dbReference type="Pfam" id="PF17136">
    <property type="entry name" value="ribosomal_L24"/>
    <property type="match status" value="1"/>
</dbReference>
<dbReference type="SUPFAM" id="SSF50104">
    <property type="entry name" value="Translation proteins SH3-like domain"/>
    <property type="match status" value="1"/>
</dbReference>
<dbReference type="PROSITE" id="PS01108">
    <property type="entry name" value="RIBOSOMAL_L24"/>
    <property type="match status" value="1"/>
</dbReference>
<protein>
    <recommendedName>
        <fullName evidence="1">Large ribosomal subunit protein uL24</fullName>
    </recommendedName>
    <alternativeName>
        <fullName evidence="2">50S ribosomal protein L24</fullName>
    </alternativeName>
</protein>
<sequence length="114" mass="12947">MAEKIVTGDEVIVIRGKDRGARGRVRQNLPREDRVIVEGVNIVKKHQRAIPGVRQAGIIEMEAPIHVSKVMLICPHCGKPTRVGFRFTETGEKVRYCKKCQQVIEKPALHRRTK</sequence>
<evidence type="ECO:0000255" key="1">
    <source>
        <dbReference type="HAMAP-Rule" id="MF_01326"/>
    </source>
</evidence>
<evidence type="ECO:0000305" key="2"/>
<organism>
    <name type="scientific">Thermomicrobium roseum (strain ATCC 27502 / DSM 5159 / P-2)</name>
    <dbReference type="NCBI Taxonomy" id="309801"/>
    <lineage>
        <taxon>Bacteria</taxon>
        <taxon>Pseudomonadati</taxon>
        <taxon>Thermomicrobiota</taxon>
        <taxon>Thermomicrobia</taxon>
        <taxon>Thermomicrobiales</taxon>
        <taxon>Thermomicrobiaceae</taxon>
        <taxon>Thermomicrobium</taxon>
    </lineage>
</organism>
<feature type="chain" id="PRO_1000165971" description="Large ribosomal subunit protein uL24">
    <location>
        <begin position="1"/>
        <end position="114"/>
    </location>
</feature>
<keyword id="KW-1185">Reference proteome</keyword>
<keyword id="KW-0687">Ribonucleoprotein</keyword>
<keyword id="KW-0689">Ribosomal protein</keyword>
<keyword id="KW-0694">RNA-binding</keyword>
<keyword id="KW-0699">rRNA-binding</keyword>
<gene>
    <name evidence="1" type="primary">rplX</name>
    <name type="ordered locus">trd_0973</name>
</gene>
<name>RL24_THERP</name>
<reference key="1">
    <citation type="journal article" date="2009" name="PLoS ONE">
        <title>Complete genome sequence of the aerobic CO-oxidizing thermophile Thermomicrobium roseum.</title>
        <authorList>
            <person name="Wu D."/>
            <person name="Raymond J."/>
            <person name="Wu M."/>
            <person name="Chatterji S."/>
            <person name="Ren Q."/>
            <person name="Graham J.E."/>
            <person name="Bryant D.A."/>
            <person name="Robb F."/>
            <person name="Colman A."/>
            <person name="Tallon L.J."/>
            <person name="Badger J.H."/>
            <person name="Madupu R."/>
            <person name="Ward N.L."/>
            <person name="Eisen J.A."/>
        </authorList>
    </citation>
    <scope>NUCLEOTIDE SEQUENCE [LARGE SCALE GENOMIC DNA]</scope>
    <source>
        <strain>ATCC 27502 / DSM 5159 / P-2</strain>
    </source>
</reference>